<dbReference type="EC" id="3.1.3.-" evidence="1"/>
<dbReference type="EMBL" id="BX950851">
    <property type="protein sequence ID" value="CAG75428.1"/>
    <property type="molecule type" value="Genomic_DNA"/>
</dbReference>
<dbReference type="RefSeq" id="WP_011094074.1">
    <property type="nucleotide sequence ID" value="NC_004547.2"/>
</dbReference>
<dbReference type="SMR" id="Q6D465"/>
<dbReference type="STRING" id="218491.ECA2529"/>
<dbReference type="KEGG" id="eca:ECA2529"/>
<dbReference type="PATRIC" id="fig|218491.5.peg.2559"/>
<dbReference type="eggNOG" id="COG1387">
    <property type="taxonomic scope" value="Bacteria"/>
</dbReference>
<dbReference type="HOGENOM" id="CLU_061999_0_1_6"/>
<dbReference type="OrthoDB" id="9808747at2"/>
<dbReference type="Proteomes" id="UP000007966">
    <property type="component" value="Chromosome"/>
</dbReference>
<dbReference type="GO" id="GO:0005829">
    <property type="term" value="C:cytosol"/>
    <property type="evidence" value="ECO:0007669"/>
    <property type="project" value="TreeGrafter"/>
</dbReference>
<dbReference type="GO" id="GO:0016791">
    <property type="term" value="F:phosphatase activity"/>
    <property type="evidence" value="ECO:0007669"/>
    <property type="project" value="UniProtKB-UniRule"/>
</dbReference>
<dbReference type="GO" id="GO:0008270">
    <property type="term" value="F:zinc ion binding"/>
    <property type="evidence" value="ECO:0007669"/>
    <property type="project" value="UniProtKB-UniRule"/>
</dbReference>
<dbReference type="GO" id="GO:0071978">
    <property type="term" value="P:bacterial-type flagellum-dependent swarming motility"/>
    <property type="evidence" value="ECO:0007669"/>
    <property type="project" value="TreeGrafter"/>
</dbReference>
<dbReference type="CDD" id="cd07437">
    <property type="entry name" value="PHP_HisPPase_Ycdx_like"/>
    <property type="match status" value="1"/>
</dbReference>
<dbReference type="FunFam" id="3.20.20.140:FF:000008">
    <property type="entry name" value="Probable phosphatase YcdX"/>
    <property type="match status" value="1"/>
</dbReference>
<dbReference type="Gene3D" id="3.20.20.140">
    <property type="entry name" value="Metal-dependent hydrolases"/>
    <property type="match status" value="1"/>
</dbReference>
<dbReference type="HAMAP" id="MF_01561">
    <property type="entry name" value="YcdX_phosphat"/>
    <property type="match status" value="1"/>
</dbReference>
<dbReference type="InterPro" id="IPR023710">
    <property type="entry name" value="Phosphatase_YcdX_put"/>
</dbReference>
<dbReference type="InterPro" id="IPR004013">
    <property type="entry name" value="PHP_dom"/>
</dbReference>
<dbReference type="InterPro" id="IPR050243">
    <property type="entry name" value="PHP_phosphatase"/>
</dbReference>
<dbReference type="InterPro" id="IPR003141">
    <property type="entry name" value="Pol/His_phosphatase_N"/>
</dbReference>
<dbReference type="InterPro" id="IPR016195">
    <property type="entry name" value="Pol/histidinol_Pase-like"/>
</dbReference>
<dbReference type="NCBIfam" id="NF006702">
    <property type="entry name" value="PRK09248.1"/>
    <property type="match status" value="1"/>
</dbReference>
<dbReference type="PANTHER" id="PTHR36928">
    <property type="entry name" value="PHOSPHATASE YCDX-RELATED"/>
    <property type="match status" value="1"/>
</dbReference>
<dbReference type="PANTHER" id="PTHR36928:SF1">
    <property type="entry name" value="PHOSPHATASE YCDX-RELATED"/>
    <property type="match status" value="1"/>
</dbReference>
<dbReference type="Pfam" id="PF02811">
    <property type="entry name" value="PHP"/>
    <property type="match status" value="1"/>
</dbReference>
<dbReference type="SMART" id="SM00481">
    <property type="entry name" value="POLIIIAc"/>
    <property type="match status" value="1"/>
</dbReference>
<dbReference type="SUPFAM" id="SSF89550">
    <property type="entry name" value="PHP domain-like"/>
    <property type="match status" value="1"/>
</dbReference>
<accession>Q6D465</accession>
<organism>
    <name type="scientific">Pectobacterium atrosepticum (strain SCRI 1043 / ATCC BAA-672)</name>
    <name type="common">Erwinia carotovora subsp. atroseptica</name>
    <dbReference type="NCBI Taxonomy" id="218491"/>
    <lineage>
        <taxon>Bacteria</taxon>
        <taxon>Pseudomonadati</taxon>
        <taxon>Pseudomonadota</taxon>
        <taxon>Gammaproteobacteria</taxon>
        <taxon>Enterobacterales</taxon>
        <taxon>Pectobacteriaceae</taxon>
        <taxon>Pectobacterium</taxon>
    </lineage>
</organism>
<keyword id="KW-0378">Hydrolase</keyword>
<keyword id="KW-0479">Metal-binding</keyword>
<keyword id="KW-1185">Reference proteome</keyword>
<keyword id="KW-0862">Zinc</keyword>
<reference key="1">
    <citation type="journal article" date="2004" name="Proc. Natl. Acad. Sci. U.S.A.">
        <title>Genome sequence of the enterobacterial phytopathogen Erwinia carotovora subsp. atroseptica and characterization of virulence factors.</title>
        <authorList>
            <person name="Bell K.S."/>
            <person name="Sebaihia M."/>
            <person name="Pritchard L."/>
            <person name="Holden M.T.G."/>
            <person name="Hyman L.J."/>
            <person name="Holeva M.C."/>
            <person name="Thomson N.R."/>
            <person name="Bentley S.D."/>
            <person name="Churcher L.J.C."/>
            <person name="Mungall K."/>
            <person name="Atkin R."/>
            <person name="Bason N."/>
            <person name="Brooks K."/>
            <person name="Chillingworth T."/>
            <person name="Clark K."/>
            <person name="Doggett J."/>
            <person name="Fraser A."/>
            <person name="Hance Z."/>
            <person name="Hauser H."/>
            <person name="Jagels K."/>
            <person name="Moule S."/>
            <person name="Norbertczak H."/>
            <person name="Ormond D."/>
            <person name="Price C."/>
            <person name="Quail M.A."/>
            <person name="Sanders M."/>
            <person name="Walker D."/>
            <person name="Whitehead S."/>
            <person name="Salmond G.P.C."/>
            <person name="Birch P.R.J."/>
            <person name="Parkhill J."/>
            <person name="Toth I.K."/>
        </authorList>
    </citation>
    <scope>NUCLEOTIDE SEQUENCE [LARGE SCALE GENOMIC DNA]</scope>
    <source>
        <strain>SCRI 1043 / ATCC BAA-672</strain>
    </source>
</reference>
<protein>
    <recommendedName>
        <fullName evidence="1">Probable phosphatase ECA2529</fullName>
        <ecNumber evidence="1">3.1.3.-</ecNumber>
    </recommendedName>
</protein>
<feature type="chain" id="PRO_0000228691" description="Probable phosphatase ECA2529">
    <location>
        <begin position="1"/>
        <end position="245"/>
    </location>
</feature>
<feature type="binding site" evidence="1">
    <location>
        <position position="7"/>
    </location>
    <ligand>
        <name>Zn(2+)</name>
        <dbReference type="ChEBI" id="CHEBI:29105"/>
        <label>1</label>
    </ligand>
</feature>
<feature type="binding site" evidence="1">
    <location>
        <position position="9"/>
    </location>
    <ligand>
        <name>Zn(2+)</name>
        <dbReference type="ChEBI" id="CHEBI:29105"/>
        <label>1</label>
    </ligand>
</feature>
<feature type="binding site" evidence="1">
    <location>
        <position position="15"/>
    </location>
    <ligand>
        <name>Zn(2+)</name>
        <dbReference type="ChEBI" id="CHEBI:29105"/>
        <label>2</label>
    </ligand>
</feature>
<feature type="binding site" evidence="1">
    <location>
        <position position="40"/>
    </location>
    <ligand>
        <name>Zn(2+)</name>
        <dbReference type="ChEBI" id="CHEBI:29105"/>
        <label>2</label>
    </ligand>
</feature>
<feature type="binding site" evidence="1">
    <location>
        <position position="73"/>
    </location>
    <ligand>
        <name>Zn(2+)</name>
        <dbReference type="ChEBI" id="CHEBI:29105"/>
        <label>1</label>
    </ligand>
</feature>
<feature type="binding site" evidence="1">
    <location>
        <position position="73"/>
    </location>
    <ligand>
        <name>Zn(2+)</name>
        <dbReference type="ChEBI" id="CHEBI:29105"/>
        <label>3</label>
    </ligand>
</feature>
<feature type="binding site" evidence="1">
    <location>
        <position position="101"/>
    </location>
    <ligand>
        <name>Zn(2+)</name>
        <dbReference type="ChEBI" id="CHEBI:29105"/>
        <label>3</label>
    </ligand>
</feature>
<feature type="binding site" evidence="1">
    <location>
        <position position="131"/>
    </location>
    <ligand>
        <name>Zn(2+)</name>
        <dbReference type="ChEBI" id="CHEBI:29105"/>
        <label>3</label>
    </ligand>
</feature>
<feature type="binding site" evidence="1">
    <location>
        <position position="192"/>
    </location>
    <ligand>
        <name>Zn(2+)</name>
        <dbReference type="ChEBI" id="CHEBI:29105"/>
        <label>1</label>
    </ligand>
</feature>
<feature type="binding site" evidence="1">
    <location>
        <position position="194"/>
    </location>
    <ligand>
        <name>Zn(2+)</name>
        <dbReference type="ChEBI" id="CHEBI:29105"/>
        <label>2</label>
    </ligand>
</feature>
<name>Y2529_PECAS</name>
<evidence type="ECO:0000255" key="1">
    <source>
        <dbReference type="HAMAP-Rule" id="MF_01561"/>
    </source>
</evidence>
<comment type="cofactor">
    <cofactor evidence="1">
        <name>Zn(2+)</name>
        <dbReference type="ChEBI" id="CHEBI:29105"/>
    </cofactor>
    <text evidence="1">Binds 3 Zn(2+) ions per subunit.</text>
</comment>
<comment type="subunit">
    <text evidence="1">Homotrimer.</text>
</comment>
<comment type="similarity">
    <text evidence="1">Belongs to the PHP family.</text>
</comment>
<gene>
    <name type="ordered locus">ECA2529</name>
</gene>
<proteinExistence type="inferred from homology"/>
<sequence>MYPVDLHMHTVASTHAYSTLHDYIVEAQQKNIRLFAITDHGPDMADAPHYWHFMNMRVWPRLVDGVGILRGIEANIKNIEGDIDCTGPMLDQVDVIIAGFHEPVFPPQDKDTHTAAMIATMARGDAHIISHPGNPKFPVDIRAIAEAAAKYNVALELNNSSFIHSRQGSEPNCRAIAEAVRDAGGLLSLGSDSHIAFSLGDFTHCERILQEVNFPQDRILNVSPRRVLDFLEQRGMPAIAELADL</sequence>